<evidence type="ECO:0000255" key="1">
    <source>
        <dbReference type="HAMAP-Rule" id="MF_01352"/>
    </source>
</evidence>
<gene>
    <name evidence="1" type="primary">ndhM</name>
    <name type="ordered locus">PMM0145</name>
</gene>
<dbReference type="EC" id="7.1.1.-" evidence="1"/>
<dbReference type="EMBL" id="BX548174">
    <property type="protein sequence ID" value="CAE18604.1"/>
    <property type="molecule type" value="Genomic_DNA"/>
</dbReference>
<dbReference type="RefSeq" id="WP_011131784.1">
    <property type="nucleotide sequence ID" value="NC_005072.1"/>
</dbReference>
<dbReference type="SMR" id="Q7V3D1"/>
<dbReference type="STRING" id="59919.PMM0145"/>
<dbReference type="KEGG" id="pmm:PMM0145"/>
<dbReference type="eggNOG" id="ENOG5031AQM">
    <property type="taxonomic scope" value="Bacteria"/>
</dbReference>
<dbReference type="HOGENOM" id="CLU_137431_0_0_3"/>
<dbReference type="OrthoDB" id="461686at2"/>
<dbReference type="Proteomes" id="UP000001026">
    <property type="component" value="Chromosome"/>
</dbReference>
<dbReference type="GO" id="GO:0031676">
    <property type="term" value="C:plasma membrane-derived thylakoid membrane"/>
    <property type="evidence" value="ECO:0007669"/>
    <property type="project" value="UniProtKB-SubCell"/>
</dbReference>
<dbReference type="GO" id="GO:0016655">
    <property type="term" value="F:oxidoreductase activity, acting on NAD(P)H, quinone or similar compound as acceptor"/>
    <property type="evidence" value="ECO:0007669"/>
    <property type="project" value="UniProtKB-UniRule"/>
</dbReference>
<dbReference type="GO" id="GO:0048038">
    <property type="term" value="F:quinone binding"/>
    <property type="evidence" value="ECO:0007669"/>
    <property type="project" value="UniProtKB-KW"/>
</dbReference>
<dbReference type="HAMAP" id="MF_01352">
    <property type="entry name" value="NDH1_NDH1M"/>
    <property type="match status" value="1"/>
</dbReference>
<dbReference type="InterPro" id="IPR018922">
    <property type="entry name" value="NdhM"/>
</dbReference>
<dbReference type="PANTHER" id="PTHR36900">
    <property type="entry name" value="NAD(P)H-QUINONE OXIDOREDUCTASE SUBUNIT M, CHLOROPLASTIC"/>
    <property type="match status" value="1"/>
</dbReference>
<dbReference type="PANTHER" id="PTHR36900:SF1">
    <property type="entry name" value="NAD(P)H-QUINONE OXIDOREDUCTASE SUBUNIT M, CHLOROPLASTIC"/>
    <property type="match status" value="1"/>
</dbReference>
<dbReference type="Pfam" id="PF10664">
    <property type="entry name" value="NdhM"/>
    <property type="match status" value="1"/>
</dbReference>
<proteinExistence type="inferred from homology"/>
<comment type="function">
    <text evidence="1">NDH-1 shuttles electrons from an unknown electron donor, via FMN and iron-sulfur (Fe-S) centers, to quinones in the respiratory and/or the photosynthetic chain. The immediate electron acceptor for the enzyme in this species is believed to be plastoquinone. Couples the redox reaction to proton translocation, and thus conserves the redox energy in a proton gradient. Cyanobacterial NDH-1 also plays a role in inorganic carbon-concentration.</text>
</comment>
<comment type="catalytic activity">
    <reaction evidence="1">
        <text>a plastoquinone + NADH + (n+1) H(+)(in) = a plastoquinol + NAD(+) + n H(+)(out)</text>
        <dbReference type="Rhea" id="RHEA:42608"/>
        <dbReference type="Rhea" id="RHEA-COMP:9561"/>
        <dbReference type="Rhea" id="RHEA-COMP:9562"/>
        <dbReference type="ChEBI" id="CHEBI:15378"/>
        <dbReference type="ChEBI" id="CHEBI:17757"/>
        <dbReference type="ChEBI" id="CHEBI:57540"/>
        <dbReference type="ChEBI" id="CHEBI:57945"/>
        <dbReference type="ChEBI" id="CHEBI:62192"/>
    </reaction>
</comment>
<comment type="catalytic activity">
    <reaction evidence="1">
        <text>a plastoquinone + NADPH + (n+1) H(+)(in) = a plastoquinol + NADP(+) + n H(+)(out)</text>
        <dbReference type="Rhea" id="RHEA:42612"/>
        <dbReference type="Rhea" id="RHEA-COMP:9561"/>
        <dbReference type="Rhea" id="RHEA-COMP:9562"/>
        <dbReference type="ChEBI" id="CHEBI:15378"/>
        <dbReference type="ChEBI" id="CHEBI:17757"/>
        <dbReference type="ChEBI" id="CHEBI:57783"/>
        <dbReference type="ChEBI" id="CHEBI:58349"/>
        <dbReference type="ChEBI" id="CHEBI:62192"/>
    </reaction>
</comment>
<comment type="subunit">
    <text evidence="1">NDH-1 can be composed of about 15 different subunits; different subcomplexes with different compositions have been identified which probably have different functions.</text>
</comment>
<comment type="subcellular location">
    <subcellularLocation>
        <location evidence="1">Cellular thylakoid membrane</location>
        <topology evidence="1">Peripheral membrane protein</topology>
        <orientation evidence="1">Cytoplasmic side</orientation>
    </subcellularLocation>
</comment>
<comment type="similarity">
    <text evidence="1">Belongs to the complex I NdhM subunit family.</text>
</comment>
<keyword id="KW-0472">Membrane</keyword>
<keyword id="KW-0520">NAD</keyword>
<keyword id="KW-0521">NADP</keyword>
<keyword id="KW-0618">Plastoquinone</keyword>
<keyword id="KW-0874">Quinone</keyword>
<keyword id="KW-0793">Thylakoid</keyword>
<keyword id="KW-1278">Translocase</keyword>
<keyword id="KW-0813">Transport</keyword>
<accession>Q7V3D1</accession>
<sequence>MEKMLLKSTTRHVRIFTADVINNDLVFHPNKLTLDLDPDNEFIWNEDSLKKVNQRFTELVQERAGKSLDDYELRKIGSEIEGLIKYLLQNGLLSYNPECRVMNYSMGLPKTKEVL</sequence>
<reference key="1">
    <citation type="journal article" date="2003" name="Nature">
        <title>Genome divergence in two Prochlorococcus ecotypes reflects oceanic niche differentiation.</title>
        <authorList>
            <person name="Rocap G."/>
            <person name="Larimer F.W."/>
            <person name="Lamerdin J.E."/>
            <person name="Malfatti S."/>
            <person name="Chain P."/>
            <person name="Ahlgren N.A."/>
            <person name="Arellano A."/>
            <person name="Coleman M."/>
            <person name="Hauser L."/>
            <person name="Hess W.R."/>
            <person name="Johnson Z.I."/>
            <person name="Land M.L."/>
            <person name="Lindell D."/>
            <person name="Post A.F."/>
            <person name="Regala W."/>
            <person name="Shah M."/>
            <person name="Shaw S.L."/>
            <person name="Steglich C."/>
            <person name="Sullivan M.B."/>
            <person name="Ting C.S."/>
            <person name="Tolonen A."/>
            <person name="Webb E.A."/>
            <person name="Zinser E.R."/>
            <person name="Chisholm S.W."/>
        </authorList>
    </citation>
    <scope>NUCLEOTIDE SEQUENCE [LARGE SCALE GENOMIC DNA]</scope>
    <source>
        <strain>CCMP1986 / NIES-2087 / MED4</strain>
    </source>
</reference>
<protein>
    <recommendedName>
        <fullName evidence="1">NAD(P)H-quinone oxidoreductase subunit M</fullName>
        <ecNumber evidence="1">7.1.1.-</ecNumber>
    </recommendedName>
    <alternativeName>
        <fullName evidence="1">NAD(P)H dehydrogenase I subunit M</fullName>
        <shortName evidence="1">NDH-1 subunit M</shortName>
        <shortName evidence="1">NDH-M</shortName>
    </alternativeName>
</protein>
<feature type="chain" id="PRO_0000352196" description="NAD(P)H-quinone oxidoreductase subunit M">
    <location>
        <begin position="1"/>
        <end position="115"/>
    </location>
</feature>
<organism>
    <name type="scientific">Prochlorococcus marinus subsp. pastoris (strain CCMP1986 / NIES-2087 / MED4)</name>
    <dbReference type="NCBI Taxonomy" id="59919"/>
    <lineage>
        <taxon>Bacteria</taxon>
        <taxon>Bacillati</taxon>
        <taxon>Cyanobacteriota</taxon>
        <taxon>Cyanophyceae</taxon>
        <taxon>Synechococcales</taxon>
        <taxon>Prochlorococcaceae</taxon>
        <taxon>Prochlorococcus</taxon>
    </lineage>
</organism>
<name>NDHM_PROMP</name>